<name>ATP6_STAAM</name>
<proteinExistence type="inferred from homology"/>
<reference key="1">
    <citation type="journal article" date="2001" name="Lancet">
        <title>Whole genome sequencing of meticillin-resistant Staphylococcus aureus.</title>
        <authorList>
            <person name="Kuroda M."/>
            <person name="Ohta T."/>
            <person name="Uchiyama I."/>
            <person name="Baba T."/>
            <person name="Yuzawa H."/>
            <person name="Kobayashi I."/>
            <person name="Cui L."/>
            <person name="Oguchi A."/>
            <person name="Aoki K."/>
            <person name="Nagai Y."/>
            <person name="Lian J.-Q."/>
            <person name="Ito T."/>
            <person name="Kanamori M."/>
            <person name="Matsumaru H."/>
            <person name="Maruyama A."/>
            <person name="Murakami H."/>
            <person name="Hosoyama A."/>
            <person name="Mizutani-Ui Y."/>
            <person name="Takahashi N.K."/>
            <person name="Sawano T."/>
            <person name="Inoue R."/>
            <person name="Kaito C."/>
            <person name="Sekimizu K."/>
            <person name="Hirakawa H."/>
            <person name="Kuhara S."/>
            <person name="Goto S."/>
            <person name="Yabuzaki J."/>
            <person name="Kanehisa M."/>
            <person name="Yamashita A."/>
            <person name="Oshima K."/>
            <person name="Furuya K."/>
            <person name="Yoshino C."/>
            <person name="Shiba T."/>
            <person name="Hattori M."/>
            <person name="Ogasawara N."/>
            <person name="Hayashi H."/>
            <person name="Hiramatsu K."/>
        </authorList>
    </citation>
    <scope>NUCLEOTIDE SEQUENCE [LARGE SCALE GENOMIC DNA]</scope>
    <source>
        <strain>Mu50 / ATCC 700699</strain>
    </source>
</reference>
<organism>
    <name type="scientific">Staphylococcus aureus (strain Mu50 / ATCC 700699)</name>
    <dbReference type="NCBI Taxonomy" id="158878"/>
    <lineage>
        <taxon>Bacteria</taxon>
        <taxon>Bacillati</taxon>
        <taxon>Bacillota</taxon>
        <taxon>Bacilli</taxon>
        <taxon>Bacillales</taxon>
        <taxon>Staphylococcaceae</taxon>
        <taxon>Staphylococcus</taxon>
    </lineage>
</organism>
<dbReference type="EMBL" id="BA000017">
    <property type="protein sequence ID" value="BAB58271.1"/>
    <property type="molecule type" value="Genomic_DNA"/>
</dbReference>
<dbReference type="RefSeq" id="WP_000349655.1">
    <property type="nucleotide sequence ID" value="NC_002758.2"/>
</dbReference>
<dbReference type="SMR" id="Q99SE9"/>
<dbReference type="KEGG" id="sav:SAV2109"/>
<dbReference type="HOGENOM" id="CLU_041018_2_3_9"/>
<dbReference type="PhylomeDB" id="Q99SE9"/>
<dbReference type="Proteomes" id="UP000002481">
    <property type="component" value="Chromosome"/>
</dbReference>
<dbReference type="GO" id="GO:0005886">
    <property type="term" value="C:plasma membrane"/>
    <property type="evidence" value="ECO:0007669"/>
    <property type="project" value="UniProtKB-SubCell"/>
</dbReference>
<dbReference type="GO" id="GO:0045259">
    <property type="term" value="C:proton-transporting ATP synthase complex"/>
    <property type="evidence" value="ECO:0007669"/>
    <property type="project" value="UniProtKB-KW"/>
</dbReference>
<dbReference type="GO" id="GO:0046933">
    <property type="term" value="F:proton-transporting ATP synthase activity, rotational mechanism"/>
    <property type="evidence" value="ECO:0007669"/>
    <property type="project" value="UniProtKB-UniRule"/>
</dbReference>
<dbReference type="GO" id="GO:0042777">
    <property type="term" value="P:proton motive force-driven plasma membrane ATP synthesis"/>
    <property type="evidence" value="ECO:0007669"/>
    <property type="project" value="TreeGrafter"/>
</dbReference>
<dbReference type="CDD" id="cd00310">
    <property type="entry name" value="ATP-synt_Fo_a_6"/>
    <property type="match status" value="1"/>
</dbReference>
<dbReference type="FunFam" id="1.20.120.220:FF:000005">
    <property type="entry name" value="ATP synthase subunit a"/>
    <property type="match status" value="1"/>
</dbReference>
<dbReference type="Gene3D" id="1.20.120.220">
    <property type="entry name" value="ATP synthase, F0 complex, subunit A"/>
    <property type="match status" value="1"/>
</dbReference>
<dbReference type="HAMAP" id="MF_01393">
    <property type="entry name" value="ATP_synth_a_bact"/>
    <property type="match status" value="1"/>
</dbReference>
<dbReference type="InterPro" id="IPR045082">
    <property type="entry name" value="ATP_syn_F0_a_bact/chloroplast"/>
</dbReference>
<dbReference type="InterPro" id="IPR000568">
    <property type="entry name" value="ATP_synth_F0_asu"/>
</dbReference>
<dbReference type="InterPro" id="IPR023011">
    <property type="entry name" value="ATP_synth_F0_asu_AS"/>
</dbReference>
<dbReference type="InterPro" id="IPR035908">
    <property type="entry name" value="F0_ATP_A_sf"/>
</dbReference>
<dbReference type="NCBIfam" id="TIGR01131">
    <property type="entry name" value="ATP_synt_6_or_A"/>
    <property type="match status" value="1"/>
</dbReference>
<dbReference type="NCBIfam" id="NF004479">
    <property type="entry name" value="PRK05815.1-4"/>
    <property type="match status" value="1"/>
</dbReference>
<dbReference type="PANTHER" id="PTHR42823">
    <property type="entry name" value="ATP SYNTHASE SUBUNIT A, CHLOROPLASTIC"/>
    <property type="match status" value="1"/>
</dbReference>
<dbReference type="PANTHER" id="PTHR42823:SF3">
    <property type="entry name" value="ATP SYNTHASE SUBUNIT A, CHLOROPLASTIC"/>
    <property type="match status" value="1"/>
</dbReference>
<dbReference type="Pfam" id="PF00119">
    <property type="entry name" value="ATP-synt_A"/>
    <property type="match status" value="1"/>
</dbReference>
<dbReference type="PRINTS" id="PR00123">
    <property type="entry name" value="ATPASEA"/>
</dbReference>
<dbReference type="SUPFAM" id="SSF81336">
    <property type="entry name" value="F1F0 ATP synthase subunit A"/>
    <property type="match status" value="1"/>
</dbReference>
<dbReference type="PROSITE" id="PS00449">
    <property type="entry name" value="ATPASE_A"/>
    <property type="match status" value="1"/>
</dbReference>
<protein>
    <recommendedName>
        <fullName evidence="1">ATP synthase subunit a</fullName>
    </recommendedName>
    <alternativeName>
        <fullName evidence="1">ATP synthase F0 sector subunit a</fullName>
    </alternativeName>
    <alternativeName>
        <fullName evidence="1">F-ATPase subunit 6</fullName>
    </alternativeName>
</protein>
<sequence>MDHKSPLVSWNLFGFDIVFNLSSILMILVTAFLVFLLAIICTRNLKKRPTGKQNFVEWIFDFVRGIIEGNMAWKKGGQFHFLAVTLILYIFIANMLGLPFSIVTKDHTLWWKSPTADATVTLTLSTTIILLTHFYGIKMRGTKQYLKGYVQPFWPLAIINVFEEFTSTLTLGLRLYGNIFAGEILLTLLAGLFFNEPAWGWIISIPGLIVWQAFSIFVGTIQAYIFIMLSMVYMSHKVADEH</sequence>
<gene>
    <name evidence="1" type="primary">atpB</name>
    <name type="ordered locus">SAV2109</name>
</gene>
<keyword id="KW-0066">ATP synthesis</keyword>
<keyword id="KW-1003">Cell membrane</keyword>
<keyword id="KW-0138">CF(0)</keyword>
<keyword id="KW-0375">Hydrogen ion transport</keyword>
<keyword id="KW-0406">Ion transport</keyword>
<keyword id="KW-0472">Membrane</keyword>
<keyword id="KW-0812">Transmembrane</keyword>
<keyword id="KW-1133">Transmembrane helix</keyword>
<keyword id="KW-0813">Transport</keyword>
<accession>Q99SE9</accession>
<feature type="chain" id="PRO_1000145312" description="ATP synthase subunit a">
    <location>
        <begin position="1"/>
        <end position="242"/>
    </location>
</feature>
<feature type="transmembrane region" description="Helical" evidence="1">
    <location>
        <begin position="21"/>
        <end position="41"/>
    </location>
</feature>
<feature type="transmembrane region" description="Helical" evidence="1">
    <location>
        <begin position="83"/>
        <end position="103"/>
    </location>
</feature>
<feature type="transmembrane region" description="Helical" evidence="1">
    <location>
        <begin position="117"/>
        <end position="137"/>
    </location>
</feature>
<feature type="transmembrane region" description="Helical" evidence="1">
    <location>
        <begin position="175"/>
        <end position="195"/>
    </location>
</feature>
<feature type="transmembrane region" description="Helical" evidence="1">
    <location>
        <begin position="198"/>
        <end position="218"/>
    </location>
</feature>
<evidence type="ECO:0000255" key="1">
    <source>
        <dbReference type="HAMAP-Rule" id="MF_01393"/>
    </source>
</evidence>
<comment type="function">
    <text evidence="1">Key component of the proton channel; it plays a direct role in the translocation of protons across the membrane.</text>
</comment>
<comment type="subunit">
    <text evidence="1">F-type ATPases have 2 components, CF(1) - the catalytic core - and CF(0) - the membrane proton channel. CF(1) has five subunits: alpha(3), beta(3), gamma(1), delta(1), epsilon(1). CF(0) has three main subunits: a(1), b(2) and c(9-12). The alpha and beta chains form an alternating ring which encloses part of the gamma chain. CF(1) is attached to CF(0) by a central stalk formed by the gamma and epsilon chains, while a peripheral stalk is formed by the delta and b chains.</text>
</comment>
<comment type="subcellular location">
    <subcellularLocation>
        <location evidence="1">Cell membrane</location>
        <topology evidence="1">Multi-pass membrane protein</topology>
    </subcellularLocation>
</comment>
<comment type="similarity">
    <text evidence="1">Belongs to the ATPase A chain family.</text>
</comment>